<organism>
    <name type="scientific">Clavibacter sepedonicus</name>
    <name type="common">Clavibacter michiganensis subsp. sepedonicus</name>
    <dbReference type="NCBI Taxonomy" id="31964"/>
    <lineage>
        <taxon>Bacteria</taxon>
        <taxon>Bacillati</taxon>
        <taxon>Actinomycetota</taxon>
        <taxon>Actinomycetes</taxon>
        <taxon>Micrococcales</taxon>
        <taxon>Microbacteriaceae</taxon>
        <taxon>Clavibacter</taxon>
    </lineage>
</organism>
<accession>B0RGW7</accession>
<protein>
    <recommendedName>
        <fullName evidence="1">Polyribonucleotide nucleotidyltransferase</fullName>
        <ecNumber evidence="1">2.7.7.8</ecNumber>
    </recommendedName>
    <alternativeName>
        <fullName evidence="1">Polynucleotide phosphorylase</fullName>
        <shortName evidence="1">PNPase</shortName>
    </alternativeName>
</protein>
<reference key="1">
    <citation type="journal article" date="2008" name="J. Bacteriol.">
        <title>Genome of the actinomycete plant pathogen Clavibacter michiganensis subsp. sepedonicus suggests recent niche adaptation.</title>
        <authorList>
            <person name="Bentley S.D."/>
            <person name="Corton C."/>
            <person name="Brown S.E."/>
            <person name="Barron A."/>
            <person name="Clark L."/>
            <person name="Doggett J."/>
            <person name="Harris B."/>
            <person name="Ormond D."/>
            <person name="Quail M.A."/>
            <person name="May G."/>
            <person name="Francis D."/>
            <person name="Knudson D."/>
            <person name="Parkhill J."/>
            <person name="Ishimaru C.A."/>
        </authorList>
    </citation>
    <scope>NUCLEOTIDE SEQUENCE [LARGE SCALE GENOMIC DNA]</scope>
    <source>
        <strain>ATCC 33113 / DSM 20744 / JCM 9667 / LMG 2889 / ICMP 2535 / C-1</strain>
    </source>
</reference>
<proteinExistence type="inferred from homology"/>
<keyword id="KW-0963">Cytoplasm</keyword>
<keyword id="KW-0460">Magnesium</keyword>
<keyword id="KW-0479">Metal-binding</keyword>
<keyword id="KW-0548">Nucleotidyltransferase</keyword>
<keyword id="KW-0694">RNA-binding</keyword>
<keyword id="KW-0808">Transferase</keyword>
<feature type="chain" id="PRO_0000381876" description="Polyribonucleotide nucleotidyltransferase">
    <location>
        <begin position="1"/>
        <end position="757"/>
    </location>
</feature>
<feature type="domain" description="KH" evidence="1">
    <location>
        <begin position="591"/>
        <end position="650"/>
    </location>
</feature>
<feature type="domain" description="S1 motif" evidence="1">
    <location>
        <begin position="662"/>
        <end position="734"/>
    </location>
</feature>
<feature type="region of interest" description="Disordered" evidence="2">
    <location>
        <begin position="736"/>
        <end position="757"/>
    </location>
</feature>
<feature type="binding site" evidence="1">
    <location>
        <position position="525"/>
    </location>
    <ligand>
        <name>Mg(2+)</name>
        <dbReference type="ChEBI" id="CHEBI:18420"/>
    </ligand>
</feature>
<feature type="binding site" evidence="1">
    <location>
        <position position="531"/>
    </location>
    <ligand>
        <name>Mg(2+)</name>
        <dbReference type="ChEBI" id="CHEBI:18420"/>
    </ligand>
</feature>
<evidence type="ECO:0000255" key="1">
    <source>
        <dbReference type="HAMAP-Rule" id="MF_01595"/>
    </source>
</evidence>
<evidence type="ECO:0000256" key="2">
    <source>
        <dbReference type="SAM" id="MobiDB-lite"/>
    </source>
</evidence>
<sequence>MEGPEIKFAEAVLDNGKYGTRTVRFEAGRLAQQAQGAVAAYLDEDTMLLSATSVGKHPKDNFDFFPLTIDVEERSYAAGKIPGSFFRREGRPSTEAILVCRLIDRPLRPSFITGLRNEVQVVITVLSIAPDEFYDSLAINAASASSMLSGIPFSGPIAGVRLALIGDQWVVFPKHSQLKEAVFDITVAGRVVTDAQGNEDVAIMMVEAEATEGAWDLIQAGATKPDEAVVAQGLEAAKPFIRQLVAAQASLAQQAAKPTVDYPVFLPYAQQSYDAVSALALEELGTVYRIADKIERQDADDALKTRTKEAVAAKVEAGELPQSALTEFSAAYKSVTKTVVRGRILRDGIRMDGRGLADIRPLDAEVQVIPRVHGSAIFQRGETQILGVTTLNMLKMEQQIDSLSPVTKKRFMTHYNFPPYSTGETGRVGSPKRREIGHGFLAERALVPVLPSREDFPYAIRQVSEALGSNGSTSMGSVCASTLSLLNAGVPLRAPVAGIAMGLVSDTVDGQVRYAALTDILGAEDALGDMDFKVAGTSEFVTAIQLDTKLDGIPTSVLDGALKQAKEARTAILGVLNQAIDAPDEMAPTAPRVISVNIPVDKIGELIGPKGKTINAIQDETGADISIEEDGAVYIGAVDGPSAEAARAQVNAIANPTNPEVGESFLGTVVKIATFGAFVSLLPGKDGLLHISEVRKLAGGKRVENVEDVLGVGQKILVEITKIDDRGKLSLAPVMEEAADQEGSAAASDGPEAPAEG</sequence>
<comment type="function">
    <text evidence="1">Involved in mRNA degradation. Catalyzes the phosphorolysis of single-stranded polyribonucleotides processively in the 3'- to 5'-direction.</text>
</comment>
<comment type="catalytic activity">
    <reaction evidence="1">
        <text>RNA(n+1) + phosphate = RNA(n) + a ribonucleoside 5'-diphosphate</text>
        <dbReference type="Rhea" id="RHEA:22096"/>
        <dbReference type="Rhea" id="RHEA-COMP:14527"/>
        <dbReference type="Rhea" id="RHEA-COMP:17342"/>
        <dbReference type="ChEBI" id="CHEBI:43474"/>
        <dbReference type="ChEBI" id="CHEBI:57930"/>
        <dbReference type="ChEBI" id="CHEBI:140395"/>
        <dbReference type="EC" id="2.7.7.8"/>
    </reaction>
</comment>
<comment type="cofactor">
    <cofactor evidence="1">
        <name>Mg(2+)</name>
        <dbReference type="ChEBI" id="CHEBI:18420"/>
    </cofactor>
</comment>
<comment type="subcellular location">
    <subcellularLocation>
        <location evidence="1">Cytoplasm</location>
    </subcellularLocation>
</comment>
<comment type="similarity">
    <text evidence="1">Belongs to the polyribonucleotide nucleotidyltransferase family.</text>
</comment>
<dbReference type="EC" id="2.7.7.8" evidence="1"/>
<dbReference type="EMBL" id="AM849034">
    <property type="protein sequence ID" value="CAQ01301.1"/>
    <property type="molecule type" value="Genomic_DNA"/>
</dbReference>
<dbReference type="RefSeq" id="WP_012298580.1">
    <property type="nucleotide sequence ID" value="NZ_MZMN01000003.1"/>
</dbReference>
<dbReference type="SMR" id="B0RGW7"/>
<dbReference type="STRING" id="31964.CMS1186"/>
<dbReference type="KEGG" id="cms:CMS1186"/>
<dbReference type="eggNOG" id="COG1185">
    <property type="taxonomic scope" value="Bacteria"/>
</dbReference>
<dbReference type="HOGENOM" id="CLU_004217_2_2_11"/>
<dbReference type="OrthoDB" id="9804305at2"/>
<dbReference type="Proteomes" id="UP000001318">
    <property type="component" value="Chromosome"/>
</dbReference>
<dbReference type="GO" id="GO:0005829">
    <property type="term" value="C:cytosol"/>
    <property type="evidence" value="ECO:0007669"/>
    <property type="project" value="TreeGrafter"/>
</dbReference>
<dbReference type="GO" id="GO:0000175">
    <property type="term" value="F:3'-5'-RNA exonuclease activity"/>
    <property type="evidence" value="ECO:0007669"/>
    <property type="project" value="TreeGrafter"/>
</dbReference>
<dbReference type="GO" id="GO:0000287">
    <property type="term" value="F:magnesium ion binding"/>
    <property type="evidence" value="ECO:0007669"/>
    <property type="project" value="UniProtKB-UniRule"/>
</dbReference>
<dbReference type="GO" id="GO:0004654">
    <property type="term" value="F:polyribonucleotide nucleotidyltransferase activity"/>
    <property type="evidence" value="ECO:0007669"/>
    <property type="project" value="UniProtKB-UniRule"/>
</dbReference>
<dbReference type="GO" id="GO:0003723">
    <property type="term" value="F:RNA binding"/>
    <property type="evidence" value="ECO:0007669"/>
    <property type="project" value="UniProtKB-UniRule"/>
</dbReference>
<dbReference type="GO" id="GO:0006402">
    <property type="term" value="P:mRNA catabolic process"/>
    <property type="evidence" value="ECO:0007669"/>
    <property type="project" value="UniProtKB-UniRule"/>
</dbReference>
<dbReference type="GO" id="GO:0006396">
    <property type="term" value="P:RNA processing"/>
    <property type="evidence" value="ECO:0007669"/>
    <property type="project" value="InterPro"/>
</dbReference>
<dbReference type="CDD" id="cd02393">
    <property type="entry name" value="KH-I_PNPase"/>
    <property type="match status" value="1"/>
</dbReference>
<dbReference type="CDD" id="cd11364">
    <property type="entry name" value="RNase_PH_PNPase_2"/>
    <property type="match status" value="1"/>
</dbReference>
<dbReference type="CDD" id="cd04472">
    <property type="entry name" value="S1_PNPase"/>
    <property type="match status" value="1"/>
</dbReference>
<dbReference type="FunFam" id="2.40.50.140:FF:000069">
    <property type="entry name" value="Polyribonucleotide nucleotidyltransferase"/>
    <property type="match status" value="1"/>
</dbReference>
<dbReference type="FunFam" id="3.30.1370.10:FF:000001">
    <property type="entry name" value="Polyribonucleotide nucleotidyltransferase"/>
    <property type="match status" value="1"/>
</dbReference>
<dbReference type="FunFam" id="3.30.230.70:FF:000001">
    <property type="entry name" value="Polyribonucleotide nucleotidyltransferase"/>
    <property type="match status" value="1"/>
</dbReference>
<dbReference type="FunFam" id="3.30.230.70:FF:000002">
    <property type="entry name" value="Polyribonucleotide nucleotidyltransferase"/>
    <property type="match status" value="1"/>
</dbReference>
<dbReference type="Gene3D" id="3.30.230.70">
    <property type="entry name" value="GHMP Kinase, N-terminal domain"/>
    <property type="match status" value="2"/>
</dbReference>
<dbReference type="Gene3D" id="3.30.1370.10">
    <property type="entry name" value="K Homology domain, type 1"/>
    <property type="match status" value="1"/>
</dbReference>
<dbReference type="Gene3D" id="2.40.50.140">
    <property type="entry name" value="Nucleic acid-binding proteins"/>
    <property type="match status" value="1"/>
</dbReference>
<dbReference type="HAMAP" id="MF_01595">
    <property type="entry name" value="PNPase"/>
    <property type="match status" value="1"/>
</dbReference>
<dbReference type="InterPro" id="IPR001247">
    <property type="entry name" value="ExoRNase_PH_dom1"/>
</dbReference>
<dbReference type="InterPro" id="IPR015847">
    <property type="entry name" value="ExoRNase_PH_dom2"/>
</dbReference>
<dbReference type="InterPro" id="IPR036345">
    <property type="entry name" value="ExoRNase_PH_dom2_sf"/>
</dbReference>
<dbReference type="InterPro" id="IPR014069">
    <property type="entry name" value="GPSI/PNP"/>
</dbReference>
<dbReference type="InterPro" id="IPR004087">
    <property type="entry name" value="KH_dom"/>
</dbReference>
<dbReference type="InterPro" id="IPR004088">
    <property type="entry name" value="KH_dom_type_1"/>
</dbReference>
<dbReference type="InterPro" id="IPR036612">
    <property type="entry name" value="KH_dom_type_1_sf"/>
</dbReference>
<dbReference type="InterPro" id="IPR012340">
    <property type="entry name" value="NA-bd_OB-fold"/>
</dbReference>
<dbReference type="InterPro" id="IPR012162">
    <property type="entry name" value="PNPase"/>
</dbReference>
<dbReference type="InterPro" id="IPR027408">
    <property type="entry name" value="PNPase/RNase_PH_dom_sf"/>
</dbReference>
<dbReference type="InterPro" id="IPR015848">
    <property type="entry name" value="PNPase_PH_RNA-bd_bac/org-type"/>
</dbReference>
<dbReference type="InterPro" id="IPR036456">
    <property type="entry name" value="PNPase_PH_RNA-bd_sf"/>
</dbReference>
<dbReference type="InterPro" id="IPR020568">
    <property type="entry name" value="Ribosomal_Su5_D2-typ_SF"/>
</dbReference>
<dbReference type="InterPro" id="IPR003029">
    <property type="entry name" value="S1_domain"/>
</dbReference>
<dbReference type="NCBIfam" id="TIGR03591">
    <property type="entry name" value="polynuc_phos"/>
    <property type="match status" value="1"/>
</dbReference>
<dbReference type="NCBIfam" id="TIGR02696">
    <property type="entry name" value="pppGpp_PNP"/>
    <property type="match status" value="1"/>
</dbReference>
<dbReference type="NCBIfam" id="NF008805">
    <property type="entry name" value="PRK11824.1"/>
    <property type="match status" value="1"/>
</dbReference>
<dbReference type="PANTHER" id="PTHR11252">
    <property type="entry name" value="POLYRIBONUCLEOTIDE NUCLEOTIDYLTRANSFERASE"/>
    <property type="match status" value="1"/>
</dbReference>
<dbReference type="PANTHER" id="PTHR11252:SF0">
    <property type="entry name" value="POLYRIBONUCLEOTIDE NUCLEOTIDYLTRANSFERASE 1, MITOCHONDRIAL"/>
    <property type="match status" value="1"/>
</dbReference>
<dbReference type="Pfam" id="PF00013">
    <property type="entry name" value="KH_1"/>
    <property type="match status" value="1"/>
</dbReference>
<dbReference type="Pfam" id="PF03726">
    <property type="entry name" value="PNPase"/>
    <property type="match status" value="1"/>
</dbReference>
<dbReference type="Pfam" id="PF01138">
    <property type="entry name" value="RNase_PH"/>
    <property type="match status" value="2"/>
</dbReference>
<dbReference type="Pfam" id="PF03725">
    <property type="entry name" value="RNase_PH_C"/>
    <property type="match status" value="1"/>
</dbReference>
<dbReference type="Pfam" id="PF00575">
    <property type="entry name" value="S1"/>
    <property type="match status" value="1"/>
</dbReference>
<dbReference type="PIRSF" id="PIRSF005499">
    <property type="entry name" value="PNPase"/>
    <property type="match status" value="1"/>
</dbReference>
<dbReference type="SMART" id="SM00322">
    <property type="entry name" value="KH"/>
    <property type="match status" value="1"/>
</dbReference>
<dbReference type="SMART" id="SM00316">
    <property type="entry name" value="S1"/>
    <property type="match status" value="1"/>
</dbReference>
<dbReference type="SUPFAM" id="SSF54791">
    <property type="entry name" value="Eukaryotic type KH-domain (KH-domain type I)"/>
    <property type="match status" value="1"/>
</dbReference>
<dbReference type="SUPFAM" id="SSF46915">
    <property type="entry name" value="Polynucleotide phosphorylase/guanosine pentaphosphate synthase (PNPase/GPSI), domain 3"/>
    <property type="match status" value="1"/>
</dbReference>
<dbReference type="SUPFAM" id="SSF55666">
    <property type="entry name" value="Ribonuclease PH domain 2-like"/>
    <property type="match status" value="2"/>
</dbReference>
<dbReference type="SUPFAM" id="SSF54211">
    <property type="entry name" value="Ribosomal protein S5 domain 2-like"/>
    <property type="match status" value="2"/>
</dbReference>
<dbReference type="PROSITE" id="PS50084">
    <property type="entry name" value="KH_TYPE_1"/>
    <property type="match status" value="1"/>
</dbReference>
<dbReference type="PROSITE" id="PS50126">
    <property type="entry name" value="S1"/>
    <property type="match status" value="1"/>
</dbReference>
<name>PNP_CLASE</name>
<gene>
    <name evidence="1" type="primary">pnp</name>
    <name type="ordered locus">CMS1186</name>
</gene>